<evidence type="ECO:0000255" key="1"/>
<evidence type="ECO:0000305" key="2"/>
<protein>
    <recommendedName>
        <fullName>Type IV secretion system protein VirB6</fullName>
    </recommendedName>
</protein>
<feature type="chain" id="PRO_0000290181" description="Type IV secretion system protein VirB6">
    <location>
        <begin position="1"/>
        <end position="347"/>
    </location>
</feature>
<feature type="transmembrane region" description="Helical" evidence="1">
    <location>
        <begin position="32"/>
        <end position="52"/>
    </location>
</feature>
<feature type="transmembrane region" description="Helical" evidence="1">
    <location>
        <begin position="61"/>
        <end position="81"/>
    </location>
</feature>
<feature type="transmembrane region" description="Helical" evidence="1">
    <location>
        <begin position="153"/>
        <end position="173"/>
    </location>
</feature>
<feature type="transmembrane region" description="Helical" evidence="1">
    <location>
        <begin position="177"/>
        <end position="197"/>
    </location>
</feature>
<feature type="transmembrane region" description="Helical" evidence="1">
    <location>
        <begin position="205"/>
        <end position="225"/>
    </location>
</feature>
<feature type="transmembrane region" description="Helical" evidence="1">
    <location>
        <begin position="245"/>
        <end position="265"/>
    </location>
</feature>
<feature type="transmembrane region" description="Helical" evidence="1">
    <location>
        <begin position="270"/>
        <end position="290"/>
    </location>
</feature>
<comment type="subcellular location">
    <subcellularLocation>
        <location evidence="2">Cell inner membrane</location>
        <topology evidence="2">Multi-pass membrane protein</topology>
    </subcellularLocation>
</comment>
<comment type="similarity">
    <text evidence="2">Belongs to the TrbL/VirB6 family.</text>
</comment>
<keyword id="KW-0997">Cell inner membrane</keyword>
<keyword id="KW-1003">Cell membrane</keyword>
<keyword id="KW-0472">Membrane</keyword>
<keyword id="KW-0812">Transmembrane</keyword>
<keyword id="KW-1133">Transmembrane helix</keyword>
<keyword id="KW-0843">Virulence</keyword>
<sequence length="347" mass="36134">MVNPVIFEFIGTSIHNQLNNYVTMVASNTMNMIATTAVLAGGLYYTAMGILMSVGRIEGPFSQLVISCIKFMLIAAFALNISTYSEWVIDTVHNMESGFADAFAGNHGTPSSTIYQTLDNSLGKGWNIAAMLFEKGDNRGLTQIVQGFSELLLSFLVAGSTLILAGPTGAMIVATNAVIAILLGIGPLFILALGWAPTRGFFDRWFGAIVTSILQVALLSAVLSISSAIFSRMVAAINLASATQSTLFSCLSLTAVTIVMPYMMYKVYEYGGILGSSISAATISLGSLAVNTATSGGGAMTSIFSGSSGGGGSGSAKAGGESSYSAGGNAMWSPAYRQHVLGQFNRD</sequence>
<reference key="1">
    <citation type="journal article" date="2005" name="J. Bacteriol.">
        <title>Completion of the genome sequence of Brucella abortus and comparison to the highly similar genomes of Brucella melitensis and Brucella suis.</title>
        <authorList>
            <person name="Halling S.M."/>
            <person name="Peterson-Burch B.D."/>
            <person name="Bricker B.J."/>
            <person name="Zuerner R.L."/>
            <person name="Qing Z."/>
            <person name="Li L.-L."/>
            <person name="Kapur V."/>
            <person name="Alt D.P."/>
            <person name="Olsen S.C."/>
        </authorList>
    </citation>
    <scope>NUCLEOTIDE SEQUENCE [LARGE SCALE GENOMIC DNA]</scope>
    <source>
        <strain>9-941</strain>
    </source>
</reference>
<accession>P0C527</accession>
<accession>Q57A19</accession>
<accession>Q9KIS7</accession>
<proteinExistence type="inferred from homology"/>
<dbReference type="EMBL" id="AE017224">
    <property type="protein sequence ID" value="AAX75515.1"/>
    <property type="molecule type" value="Genomic_DNA"/>
</dbReference>
<dbReference type="RefSeq" id="WP_002969266.1">
    <property type="nucleotide sequence ID" value="NC_006933.1"/>
</dbReference>
<dbReference type="SMR" id="P0C527"/>
<dbReference type="EnsemblBacteria" id="AAX75515">
    <property type="protein sequence ID" value="AAX75515"/>
    <property type="gene ID" value="BruAb2_0064"/>
</dbReference>
<dbReference type="KEGG" id="bmb:BruAb2_0064"/>
<dbReference type="HOGENOM" id="CLU_065797_0_0_5"/>
<dbReference type="PRO" id="PR:P0C527"/>
<dbReference type="Proteomes" id="UP000000540">
    <property type="component" value="Chromosome II"/>
</dbReference>
<dbReference type="GO" id="GO:0005886">
    <property type="term" value="C:plasma membrane"/>
    <property type="evidence" value="ECO:0007669"/>
    <property type="project" value="UniProtKB-SubCell"/>
</dbReference>
<dbReference type="GO" id="GO:0030255">
    <property type="term" value="P:protein secretion by the type IV secretion system"/>
    <property type="evidence" value="ECO:0007669"/>
    <property type="project" value="InterPro"/>
</dbReference>
<dbReference type="InterPro" id="IPR007688">
    <property type="entry name" value="Conjugal_tfr_TrbL/VirB6"/>
</dbReference>
<dbReference type="Pfam" id="PF04610">
    <property type="entry name" value="TrbL"/>
    <property type="match status" value="1"/>
</dbReference>
<gene>
    <name type="primary">virB6</name>
    <name type="ordered locus">BruAb2_0064</name>
</gene>
<organism>
    <name type="scientific">Brucella abortus biovar 1 (strain 9-941)</name>
    <dbReference type="NCBI Taxonomy" id="262698"/>
    <lineage>
        <taxon>Bacteria</taxon>
        <taxon>Pseudomonadati</taxon>
        <taxon>Pseudomonadota</taxon>
        <taxon>Alphaproteobacteria</taxon>
        <taxon>Hyphomicrobiales</taxon>
        <taxon>Brucellaceae</taxon>
        <taxon>Brucella/Ochrobactrum group</taxon>
        <taxon>Brucella</taxon>
    </lineage>
</organism>
<name>VIRB6_BRUAB</name>